<protein>
    <recommendedName>
        <fullName evidence="2">PTTG1IP family member 2</fullName>
    </recommendedName>
</protein>
<evidence type="ECO:0000255" key="1"/>
<evidence type="ECO:0000305" key="2"/>
<evidence type="ECO:0000312" key="3">
    <source>
        <dbReference type="MGI" id="MGI:2686532"/>
    </source>
</evidence>
<organism>
    <name type="scientific">Mus musculus</name>
    <name type="common">Mouse</name>
    <dbReference type="NCBI Taxonomy" id="10090"/>
    <lineage>
        <taxon>Eukaryota</taxon>
        <taxon>Metazoa</taxon>
        <taxon>Chordata</taxon>
        <taxon>Craniata</taxon>
        <taxon>Vertebrata</taxon>
        <taxon>Euteleostomi</taxon>
        <taxon>Mammalia</taxon>
        <taxon>Eutheria</taxon>
        <taxon>Euarchontoglires</taxon>
        <taxon>Glires</taxon>
        <taxon>Rodentia</taxon>
        <taxon>Myomorpha</taxon>
        <taxon>Muroidea</taxon>
        <taxon>Muridae</taxon>
        <taxon>Murinae</taxon>
        <taxon>Mus</taxon>
        <taxon>Mus</taxon>
    </lineage>
</organism>
<sequence length="150" mass="18023">MCWLRAWSHILLPVFLSVALIQLIFNLSDHKTKTHHHWKRKIEAKYVEKECAQKETCPVCTRDKRCIWCREEKVCKKYCFPYSDCKFNSIFWANCNVDLFGIVMLILIVILALAFLWYCLAYYFYMQQHMALYARHGQVPVYNWDAPGDW</sequence>
<dbReference type="EMBL" id="AC068663">
    <property type="status" value="NOT_ANNOTATED_CDS"/>
    <property type="molecule type" value="Genomic_DNA"/>
</dbReference>
<dbReference type="CCDS" id="CCDS51410.1"/>
<dbReference type="RefSeq" id="NP_001186954.1">
    <property type="nucleotide sequence ID" value="NM_001200025.1"/>
</dbReference>
<dbReference type="SMR" id="D3YUK8"/>
<dbReference type="FunCoup" id="D3YUK8">
    <property type="interactions" value="9"/>
</dbReference>
<dbReference type="GlyCosmos" id="D3YUK8">
    <property type="glycosylation" value="1 site, No reported glycans"/>
</dbReference>
<dbReference type="GlyGen" id="D3YUK8">
    <property type="glycosylation" value="1 site"/>
</dbReference>
<dbReference type="PaxDb" id="10090-ENSMUSP00000111107"/>
<dbReference type="Ensembl" id="ENSMUST00000115447.2">
    <property type="protein sequence ID" value="ENSMUSP00000111107.2"/>
    <property type="gene ID" value="ENSMUSG00000079666.9"/>
</dbReference>
<dbReference type="GeneID" id="381716"/>
<dbReference type="KEGG" id="mmu:381716"/>
<dbReference type="UCSC" id="uc008wio.2">
    <property type="organism name" value="mouse"/>
</dbReference>
<dbReference type="AGR" id="MGI:2686532"/>
<dbReference type="CTD" id="102723899"/>
<dbReference type="MGI" id="MGI:2686532">
    <property type="gene designation" value="Pttg1ip2"/>
</dbReference>
<dbReference type="VEuPathDB" id="HostDB:ENSMUSG00000079666"/>
<dbReference type="eggNOG" id="ENOG502T3TA">
    <property type="taxonomic scope" value="Eukaryota"/>
</dbReference>
<dbReference type="GeneTree" id="ENSGT00390000004977"/>
<dbReference type="HOGENOM" id="CLU_1901122_0_0_1"/>
<dbReference type="InParanoid" id="D3YUK8"/>
<dbReference type="OMA" id="RCIWCRE"/>
<dbReference type="OrthoDB" id="9607952at2759"/>
<dbReference type="PhylomeDB" id="D3YUK8"/>
<dbReference type="BioGRID-ORCS" id="381716">
    <property type="hits" value="2 hits in 77 CRISPR screens"/>
</dbReference>
<dbReference type="PRO" id="PR:D3YUK8"/>
<dbReference type="Proteomes" id="UP000000589">
    <property type="component" value="Chromosome 5"/>
</dbReference>
<dbReference type="RNAct" id="D3YUK8">
    <property type="molecule type" value="protein"/>
</dbReference>
<dbReference type="Bgee" id="ENSMUSG00000079666">
    <property type="expression patterns" value="Expressed in spermatid and 24 other cell types or tissues"/>
</dbReference>
<dbReference type="ExpressionAtlas" id="D3YUK8">
    <property type="expression patterns" value="baseline and differential"/>
</dbReference>
<dbReference type="GO" id="GO:0016020">
    <property type="term" value="C:membrane"/>
    <property type="evidence" value="ECO:0007669"/>
    <property type="project" value="UniProtKB-SubCell"/>
</dbReference>
<dbReference type="InterPro" id="IPR052304">
    <property type="entry name" value="PTTG1IP"/>
</dbReference>
<dbReference type="PANTHER" id="PTHR15191:SF14">
    <property type="entry name" value="PITUITARY TUMOR-TRANSFORMING GENE 1 PROTEIN-INTERACTING PROTEIN"/>
    <property type="match status" value="1"/>
</dbReference>
<dbReference type="PANTHER" id="PTHR15191">
    <property type="entry name" value="PROTEIN CBG20567"/>
    <property type="match status" value="1"/>
</dbReference>
<reference key="1">
    <citation type="journal article" date="2009" name="PLoS Biol.">
        <title>Lineage-specific biology revealed by a finished genome assembly of the mouse.</title>
        <authorList>
            <person name="Church D.M."/>
            <person name="Goodstadt L."/>
            <person name="Hillier L.W."/>
            <person name="Zody M.C."/>
            <person name="Goldstein S."/>
            <person name="She X."/>
            <person name="Bult C.J."/>
            <person name="Agarwala R."/>
            <person name="Cherry J.L."/>
            <person name="DiCuccio M."/>
            <person name="Hlavina W."/>
            <person name="Kapustin Y."/>
            <person name="Meric P."/>
            <person name="Maglott D."/>
            <person name="Birtle Z."/>
            <person name="Marques A.C."/>
            <person name="Graves T."/>
            <person name="Zhou S."/>
            <person name="Teague B."/>
            <person name="Potamousis K."/>
            <person name="Churas C."/>
            <person name="Place M."/>
            <person name="Herschleb J."/>
            <person name="Runnheim R."/>
            <person name="Forrest D."/>
            <person name="Amos-Landgraf J."/>
            <person name="Schwartz D.C."/>
            <person name="Cheng Z."/>
            <person name="Lindblad-Toh K."/>
            <person name="Eichler E.E."/>
            <person name="Ponting C.P."/>
        </authorList>
    </citation>
    <scope>NUCLEOTIDE SEQUENCE [LARGE SCALE GENOMIC DNA]</scope>
    <source>
        <strain>C57BL/6J</strain>
    </source>
</reference>
<proteinExistence type="inferred from homology"/>
<feature type="signal peptide" evidence="1">
    <location>
        <begin position="1"/>
        <end position="19"/>
    </location>
</feature>
<feature type="chain" id="PRO_0000452021" description="PTTG1IP family member 2" evidence="1">
    <location>
        <begin position="20"/>
        <end position="150"/>
    </location>
</feature>
<feature type="topological domain" description="Extracellular" evidence="2">
    <location>
        <begin position="20"/>
        <end position="98"/>
    </location>
</feature>
<feature type="transmembrane region" description="Helical" evidence="1">
    <location>
        <begin position="99"/>
        <end position="119"/>
    </location>
</feature>
<feature type="topological domain" description="Cytoplasmic" evidence="2">
    <location>
        <begin position="120"/>
        <end position="150"/>
    </location>
</feature>
<feature type="glycosylation site" description="N-linked (GlcNAc...) asparagine" evidence="1">
    <location>
        <position position="26"/>
    </location>
</feature>
<keyword id="KW-0325">Glycoprotein</keyword>
<keyword id="KW-0472">Membrane</keyword>
<keyword id="KW-1185">Reference proteome</keyword>
<keyword id="KW-0732">Signal</keyword>
<keyword id="KW-0812">Transmembrane</keyword>
<keyword id="KW-1133">Transmembrane helix</keyword>
<name>PTIP2_MOUSE</name>
<gene>
    <name evidence="3" type="primary">Pttg1ip2</name>
</gene>
<comment type="subcellular location">
    <subcellularLocation>
        <location evidence="1">Membrane</location>
        <topology evidence="1">Single-pass type I membrane protein</topology>
    </subcellularLocation>
</comment>
<accession>D3YUK8</accession>